<name>YAEH_SALG2</name>
<accession>B5RHE9</accession>
<proteinExistence type="inferred from homology"/>
<sequence length="128" mass="15094">MYDNLKSLGITNPEEIDRYSLRQEANNDILKIYFQKDRGEFFAKSVKFKYPRQRKTVVADGIGQGYKEVQEISPNLRYVIDELDQICQRDRSELDLKRKILDDLRHLESVVANKISEIEADLDKLTRK</sequence>
<protein>
    <recommendedName>
        <fullName evidence="1">UPF0325 protein YaeH</fullName>
    </recommendedName>
</protein>
<reference key="1">
    <citation type="journal article" date="2008" name="Genome Res.">
        <title>Comparative genome analysis of Salmonella enteritidis PT4 and Salmonella gallinarum 287/91 provides insights into evolutionary and host adaptation pathways.</title>
        <authorList>
            <person name="Thomson N.R."/>
            <person name="Clayton D.J."/>
            <person name="Windhorst D."/>
            <person name="Vernikos G."/>
            <person name="Davidson S."/>
            <person name="Churcher C."/>
            <person name="Quail M.A."/>
            <person name="Stevens M."/>
            <person name="Jones M.A."/>
            <person name="Watson M."/>
            <person name="Barron A."/>
            <person name="Layton A."/>
            <person name="Pickard D."/>
            <person name="Kingsley R.A."/>
            <person name="Bignell A."/>
            <person name="Clark L."/>
            <person name="Harris B."/>
            <person name="Ormond D."/>
            <person name="Abdellah Z."/>
            <person name="Brooks K."/>
            <person name="Cherevach I."/>
            <person name="Chillingworth T."/>
            <person name="Woodward J."/>
            <person name="Norberczak H."/>
            <person name="Lord A."/>
            <person name="Arrowsmith C."/>
            <person name="Jagels K."/>
            <person name="Moule S."/>
            <person name="Mungall K."/>
            <person name="Saunders M."/>
            <person name="Whitehead S."/>
            <person name="Chabalgoity J.A."/>
            <person name="Maskell D."/>
            <person name="Humphreys T."/>
            <person name="Roberts M."/>
            <person name="Barrow P.A."/>
            <person name="Dougan G."/>
            <person name="Parkhill J."/>
        </authorList>
    </citation>
    <scope>NUCLEOTIDE SEQUENCE [LARGE SCALE GENOMIC DNA]</scope>
    <source>
        <strain>287/91 / NCTC 13346</strain>
    </source>
</reference>
<comment type="similarity">
    <text evidence="1">Belongs to the UPF0325 family.</text>
</comment>
<dbReference type="EMBL" id="AM933173">
    <property type="protein sequence ID" value="CAR36122.1"/>
    <property type="molecule type" value="Genomic_DNA"/>
</dbReference>
<dbReference type="RefSeq" id="WP_000272193.1">
    <property type="nucleotide sequence ID" value="NC_011274.1"/>
</dbReference>
<dbReference type="SMR" id="B5RHE9"/>
<dbReference type="KEGG" id="seg:SG0215"/>
<dbReference type="HOGENOM" id="CLU_136774_0_0_6"/>
<dbReference type="Proteomes" id="UP000008321">
    <property type="component" value="Chromosome"/>
</dbReference>
<dbReference type="HAMAP" id="MF_01519">
    <property type="entry name" value="UPF0325"/>
    <property type="match status" value="1"/>
</dbReference>
<dbReference type="InterPro" id="IPR020911">
    <property type="entry name" value="UPF0325"/>
</dbReference>
<dbReference type="NCBIfam" id="NF010213">
    <property type="entry name" value="PRK13677.1"/>
    <property type="match status" value="1"/>
</dbReference>
<dbReference type="Pfam" id="PF11944">
    <property type="entry name" value="DUF3461"/>
    <property type="match status" value="1"/>
</dbReference>
<organism>
    <name type="scientific">Salmonella gallinarum (strain 287/91 / NCTC 13346)</name>
    <dbReference type="NCBI Taxonomy" id="550538"/>
    <lineage>
        <taxon>Bacteria</taxon>
        <taxon>Pseudomonadati</taxon>
        <taxon>Pseudomonadota</taxon>
        <taxon>Gammaproteobacteria</taxon>
        <taxon>Enterobacterales</taxon>
        <taxon>Enterobacteriaceae</taxon>
        <taxon>Salmonella</taxon>
    </lineage>
</organism>
<evidence type="ECO:0000255" key="1">
    <source>
        <dbReference type="HAMAP-Rule" id="MF_01519"/>
    </source>
</evidence>
<gene>
    <name evidence="1" type="primary">yaeH</name>
    <name type="ordered locus">SG0215</name>
</gene>
<feature type="chain" id="PRO_1000198438" description="UPF0325 protein YaeH">
    <location>
        <begin position="1"/>
        <end position="128"/>
    </location>
</feature>